<proteinExistence type="inferred from homology"/>
<keyword id="KW-0227">DNA damage</keyword>
<keyword id="KW-0234">DNA repair</keyword>
<keyword id="KW-0235">DNA replication</keyword>
<keyword id="KW-0436">Ligase</keyword>
<keyword id="KW-0460">Magnesium</keyword>
<keyword id="KW-0464">Manganese</keyword>
<keyword id="KW-0479">Metal-binding</keyword>
<keyword id="KW-0520">NAD</keyword>
<keyword id="KW-1185">Reference proteome</keyword>
<keyword id="KW-0862">Zinc</keyword>
<sequence length="671" mass="73452">MEPIEQQLTELRTTLRHHEYLYHVMDAPEIPDAEYDRLMRELRELEAQRPDLITPDSPTQRVGAAPLTAFNQIRHEVPMLSLDNVFDEESFLAFNKRVQDRLKSTENVIWCCELKLDGLAVSILYENGVLVSAATRGDGTTGEDITSNVRTIRAIPLKLHGDNIPARLEVRGEVFLPQAGFEKINEDARRTGGKVFANPRNAAAGSLRQLDPRITAKRPLTFFCYGVGILEGGELPDTHLGRLLQFKAWGLPVSDRVTLCDSPQAVLDFYHNVEKDRPTLGFDIDGVVIKVNSLALQELLGFVARAPRWAVAFKFPAQEQMTFVRDVEFQVGRTGAITPVARLEPVQVAGVLVSNATLHNADEIERLGLRIGDKVVIRRAGDVIPQVVNVVLSERPEETRPIVFPTHCPVCGSDVERVEGEAVTRCTGGLICGAQRKESLKHFVSRRAMDVDGMGDKIIDQLVEREYVHTPADLFRLTAGKLTGLDRMGPKSAQNVVNALEKSKTTTFARFLYALGIREVGEATAAGLAAYFGTLEALQAATIDELQKVPDVGIVVATHVFNFFAEESNRDVIGQLLAEGVHWPAPVVINVQEIDSPFAGKTVVLTGSLSQMSRDDAKARLVALGAKVAGSVSKKTDLVIAGEAAGSKLAKAQELGITVIDEAEMIRLLGA</sequence>
<reference key="1">
    <citation type="journal article" date="2001" name="Nature">
        <title>Complete genome sequence of Salmonella enterica serovar Typhimurium LT2.</title>
        <authorList>
            <person name="McClelland M."/>
            <person name="Sanderson K.E."/>
            <person name="Spieth J."/>
            <person name="Clifton S.W."/>
            <person name="Latreille P."/>
            <person name="Courtney L."/>
            <person name="Porwollik S."/>
            <person name="Ali J."/>
            <person name="Dante M."/>
            <person name="Du F."/>
            <person name="Hou S."/>
            <person name="Layman D."/>
            <person name="Leonard S."/>
            <person name="Nguyen C."/>
            <person name="Scott K."/>
            <person name="Holmes A."/>
            <person name="Grewal N."/>
            <person name="Mulvaney E."/>
            <person name="Ryan E."/>
            <person name="Sun H."/>
            <person name="Florea L."/>
            <person name="Miller W."/>
            <person name="Stoneking T."/>
            <person name="Nhan M."/>
            <person name="Waterston R."/>
            <person name="Wilson R.K."/>
        </authorList>
    </citation>
    <scope>NUCLEOTIDE SEQUENCE [LARGE SCALE GENOMIC DNA]</scope>
    <source>
        <strain>LT2 / SGSC1412 / ATCC 700720</strain>
    </source>
</reference>
<dbReference type="EC" id="6.5.1.2" evidence="1"/>
<dbReference type="EMBL" id="AE006468">
    <property type="protein sequence ID" value="AAL21321.1"/>
    <property type="molecule type" value="Genomic_DNA"/>
</dbReference>
<dbReference type="RefSeq" id="WP_000433266.1">
    <property type="nucleotide sequence ID" value="NC_003197.2"/>
</dbReference>
<dbReference type="SMR" id="Q8ZN89"/>
<dbReference type="STRING" id="99287.STM2427"/>
<dbReference type="PaxDb" id="99287-STM2427"/>
<dbReference type="KEGG" id="stm:STM2427"/>
<dbReference type="PATRIC" id="fig|99287.12.peg.2564"/>
<dbReference type="HOGENOM" id="CLU_007764_2_1_6"/>
<dbReference type="OMA" id="HDVEHEI"/>
<dbReference type="PhylomeDB" id="Q8ZN89"/>
<dbReference type="BioCyc" id="SENT99287:STM2427-MONOMER"/>
<dbReference type="Proteomes" id="UP000001014">
    <property type="component" value="Chromosome"/>
</dbReference>
<dbReference type="GO" id="GO:0005829">
    <property type="term" value="C:cytosol"/>
    <property type="evidence" value="ECO:0000318"/>
    <property type="project" value="GO_Central"/>
</dbReference>
<dbReference type="GO" id="GO:0003677">
    <property type="term" value="F:DNA binding"/>
    <property type="evidence" value="ECO:0007669"/>
    <property type="project" value="InterPro"/>
</dbReference>
<dbReference type="GO" id="GO:0003911">
    <property type="term" value="F:DNA ligase (NAD+) activity"/>
    <property type="evidence" value="ECO:0000318"/>
    <property type="project" value="GO_Central"/>
</dbReference>
<dbReference type="GO" id="GO:0046872">
    <property type="term" value="F:metal ion binding"/>
    <property type="evidence" value="ECO:0007669"/>
    <property type="project" value="UniProtKB-KW"/>
</dbReference>
<dbReference type="GO" id="GO:0006281">
    <property type="term" value="P:DNA repair"/>
    <property type="evidence" value="ECO:0007669"/>
    <property type="project" value="UniProtKB-KW"/>
</dbReference>
<dbReference type="GO" id="GO:0006260">
    <property type="term" value="P:DNA replication"/>
    <property type="evidence" value="ECO:0007669"/>
    <property type="project" value="UniProtKB-KW"/>
</dbReference>
<dbReference type="CDD" id="cd17748">
    <property type="entry name" value="BRCT_DNA_ligase_like"/>
    <property type="match status" value="1"/>
</dbReference>
<dbReference type="CDD" id="cd00114">
    <property type="entry name" value="LIGANc"/>
    <property type="match status" value="1"/>
</dbReference>
<dbReference type="FunFam" id="1.10.150.20:FF:000006">
    <property type="entry name" value="DNA ligase"/>
    <property type="match status" value="1"/>
</dbReference>
<dbReference type="FunFam" id="1.10.150.20:FF:000007">
    <property type="entry name" value="DNA ligase"/>
    <property type="match status" value="1"/>
</dbReference>
<dbReference type="FunFam" id="1.10.287.610:FF:000002">
    <property type="entry name" value="DNA ligase"/>
    <property type="match status" value="1"/>
</dbReference>
<dbReference type="FunFam" id="2.40.50.140:FF:000012">
    <property type="entry name" value="DNA ligase"/>
    <property type="match status" value="1"/>
</dbReference>
<dbReference type="FunFam" id="3.30.470.30:FF:000001">
    <property type="entry name" value="DNA ligase"/>
    <property type="match status" value="1"/>
</dbReference>
<dbReference type="FunFam" id="3.40.50.10190:FF:000004">
    <property type="entry name" value="DNA ligase"/>
    <property type="match status" value="1"/>
</dbReference>
<dbReference type="FunFam" id="6.20.10.30:FF:000001">
    <property type="entry name" value="DNA ligase"/>
    <property type="match status" value="1"/>
</dbReference>
<dbReference type="Gene3D" id="6.20.10.30">
    <property type="match status" value="1"/>
</dbReference>
<dbReference type="Gene3D" id="1.10.150.20">
    <property type="entry name" value="5' to 3' exonuclease, C-terminal subdomain"/>
    <property type="match status" value="2"/>
</dbReference>
<dbReference type="Gene3D" id="3.40.50.10190">
    <property type="entry name" value="BRCT domain"/>
    <property type="match status" value="1"/>
</dbReference>
<dbReference type="Gene3D" id="3.30.470.30">
    <property type="entry name" value="DNA ligase/mRNA capping enzyme"/>
    <property type="match status" value="1"/>
</dbReference>
<dbReference type="Gene3D" id="1.10.287.610">
    <property type="entry name" value="Helix hairpin bin"/>
    <property type="match status" value="1"/>
</dbReference>
<dbReference type="Gene3D" id="2.40.50.140">
    <property type="entry name" value="Nucleic acid-binding proteins"/>
    <property type="match status" value="1"/>
</dbReference>
<dbReference type="HAMAP" id="MF_01588">
    <property type="entry name" value="DNA_ligase_A"/>
    <property type="match status" value="1"/>
</dbReference>
<dbReference type="InterPro" id="IPR001357">
    <property type="entry name" value="BRCT_dom"/>
</dbReference>
<dbReference type="InterPro" id="IPR036420">
    <property type="entry name" value="BRCT_dom_sf"/>
</dbReference>
<dbReference type="InterPro" id="IPR041663">
    <property type="entry name" value="DisA/LigA_HHH"/>
</dbReference>
<dbReference type="InterPro" id="IPR001679">
    <property type="entry name" value="DNA_ligase"/>
</dbReference>
<dbReference type="InterPro" id="IPR018239">
    <property type="entry name" value="DNA_ligase_AS"/>
</dbReference>
<dbReference type="InterPro" id="IPR033136">
    <property type="entry name" value="DNA_ligase_CS"/>
</dbReference>
<dbReference type="InterPro" id="IPR013839">
    <property type="entry name" value="DNAligase_adenylation"/>
</dbReference>
<dbReference type="InterPro" id="IPR013840">
    <property type="entry name" value="DNAligase_N"/>
</dbReference>
<dbReference type="InterPro" id="IPR003583">
    <property type="entry name" value="Hlx-hairpin-Hlx_DNA-bd_motif"/>
</dbReference>
<dbReference type="InterPro" id="IPR012340">
    <property type="entry name" value="NA-bd_OB-fold"/>
</dbReference>
<dbReference type="InterPro" id="IPR004150">
    <property type="entry name" value="NAD_DNA_ligase_OB"/>
</dbReference>
<dbReference type="InterPro" id="IPR010994">
    <property type="entry name" value="RuvA_2-like"/>
</dbReference>
<dbReference type="InterPro" id="IPR004149">
    <property type="entry name" value="Znf_DNAligase_C4"/>
</dbReference>
<dbReference type="NCBIfam" id="TIGR00575">
    <property type="entry name" value="dnlj"/>
    <property type="match status" value="1"/>
</dbReference>
<dbReference type="NCBIfam" id="NF005932">
    <property type="entry name" value="PRK07956.1"/>
    <property type="match status" value="1"/>
</dbReference>
<dbReference type="PANTHER" id="PTHR23389">
    <property type="entry name" value="CHROMOSOME TRANSMISSION FIDELITY FACTOR 18"/>
    <property type="match status" value="1"/>
</dbReference>
<dbReference type="PANTHER" id="PTHR23389:SF9">
    <property type="entry name" value="DNA LIGASE"/>
    <property type="match status" value="1"/>
</dbReference>
<dbReference type="Pfam" id="PF00533">
    <property type="entry name" value="BRCT"/>
    <property type="match status" value="1"/>
</dbReference>
<dbReference type="Pfam" id="PF01653">
    <property type="entry name" value="DNA_ligase_aden"/>
    <property type="match status" value="1"/>
</dbReference>
<dbReference type="Pfam" id="PF03120">
    <property type="entry name" value="DNA_ligase_OB"/>
    <property type="match status" value="1"/>
</dbReference>
<dbReference type="Pfam" id="PF03119">
    <property type="entry name" value="DNA_ligase_ZBD"/>
    <property type="match status" value="1"/>
</dbReference>
<dbReference type="Pfam" id="PF12826">
    <property type="entry name" value="HHH_2"/>
    <property type="match status" value="1"/>
</dbReference>
<dbReference type="Pfam" id="PF14520">
    <property type="entry name" value="HHH_5"/>
    <property type="match status" value="1"/>
</dbReference>
<dbReference type="Pfam" id="PF22745">
    <property type="entry name" value="Nlig-Ia"/>
    <property type="match status" value="1"/>
</dbReference>
<dbReference type="PIRSF" id="PIRSF001604">
    <property type="entry name" value="LigA"/>
    <property type="match status" value="1"/>
</dbReference>
<dbReference type="SMART" id="SM00292">
    <property type="entry name" value="BRCT"/>
    <property type="match status" value="1"/>
</dbReference>
<dbReference type="SMART" id="SM00278">
    <property type="entry name" value="HhH1"/>
    <property type="match status" value="4"/>
</dbReference>
<dbReference type="SMART" id="SM00532">
    <property type="entry name" value="LIGANc"/>
    <property type="match status" value="1"/>
</dbReference>
<dbReference type="SUPFAM" id="SSF52113">
    <property type="entry name" value="BRCT domain"/>
    <property type="match status" value="1"/>
</dbReference>
<dbReference type="SUPFAM" id="SSF56091">
    <property type="entry name" value="DNA ligase/mRNA capping enzyme, catalytic domain"/>
    <property type="match status" value="1"/>
</dbReference>
<dbReference type="SUPFAM" id="SSF50249">
    <property type="entry name" value="Nucleic acid-binding proteins"/>
    <property type="match status" value="1"/>
</dbReference>
<dbReference type="SUPFAM" id="SSF47781">
    <property type="entry name" value="RuvA domain 2-like"/>
    <property type="match status" value="1"/>
</dbReference>
<dbReference type="PROSITE" id="PS50172">
    <property type="entry name" value="BRCT"/>
    <property type="match status" value="1"/>
</dbReference>
<dbReference type="PROSITE" id="PS01055">
    <property type="entry name" value="DNA_LIGASE_N1"/>
    <property type="match status" value="1"/>
</dbReference>
<dbReference type="PROSITE" id="PS01056">
    <property type="entry name" value="DNA_LIGASE_N2"/>
    <property type="match status" value="1"/>
</dbReference>
<organism>
    <name type="scientific">Salmonella typhimurium (strain LT2 / SGSC1412 / ATCC 700720)</name>
    <dbReference type="NCBI Taxonomy" id="99287"/>
    <lineage>
        <taxon>Bacteria</taxon>
        <taxon>Pseudomonadati</taxon>
        <taxon>Pseudomonadota</taxon>
        <taxon>Gammaproteobacteria</taxon>
        <taxon>Enterobacterales</taxon>
        <taxon>Enterobacteriaceae</taxon>
        <taxon>Salmonella</taxon>
    </lineage>
</organism>
<name>DNLJ_SALTY</name>
<protein>
    <recommendedName>
        <fullName evidence="1">DNA ligase</fullName>
        <ecNumber evidence="1">6.5.1.2</ecNumber>
    </recommendedName>
    <alternativeName>
        <fullName evidence="1">Polydeoxyribonucleotide synthase [NAD(+)]</fullName>
    </alternativeName>
</protein>
<feature type="chain" id="PRO_0000313421" description="DNA ligase">
    <location>
        <begin position="1"/>
        <end position="671"/>
    </location>
</feature>
<feature type="domain" description="BRCT" evidence="1">
    <location>
        <begin position="593"/>
        <end position="671"/>
    </location>
</feature>
<feature type="active site" description="N6-AMP-lysine intermediate" evidence="1">
    <location>
        <position position="115"/>
    </location>
</feature>
<feature type="binding site" evidence="1">
    <location>
        <begin position="32"/>
        <end position="36"/>
    </location>
    <ligand>
        <name>NAD(+)</name>
        <dbReference type="ChEBI" id="CHEBI:57540"/>
    </ligand>
</feature>
<feature type="binding site" evidence="1">
    <location>
        <begin position="81"/>
        <end position="82"/>
    </location>
    <ligand>
        <name>NAD(+)</name>
        <dbReference type="ChEBI" id="CHEBI:57540"/>
    </ligand>
</feature>
<feature type="binding site" evidence="1">
    <location>
        <position position="113"/>
    </location>
    <ligand>
        <name>NAD(+)</name>
        <dbReference type="ChEBI" id="CHEBI:57540"/>
    </ligand>
</feature>
<feature type="binding site" evidence="1">
    <location>
        <position position="136"/>
    </location>
    <ligand>
        <name>NAD(+)</name>
        <dbReference type="ChEBI" id="CHEBI:57540"/>
    </ligand>
</feature>
<feature type="binding site" evidence="1">
    <location>
        <position position="173"/>
    </location>
    <ligand>
        <name>NAD(+)</name>
        <dbReference type="ChEBI" id="CHEBI:57540"/>
    </ligand>
</feature>
<feature type="binding site" evidence="1">
    <location>
        <position position="290"/>
    </location>
    <ligand>
        <name>NAD(+)</name>
        <dbReference type="ChEBI" id="CHEBI:57540"/>
    </ligand>
</feature>
<feature type="binding site" evidence="1">
    <location>
        <position position="314"/>
    </location>
    <ligand>
        <name>NAD(+)</name>
        <dbReference type="ChEBI" id="CHEBI:57540"/>
    </ligand>
</feature>
<feature type="binding site" evidence="1">
    <location>
        <position position="408"/>
    </location>
    <ligand>
        <name>Zn(2+)</name>
        <dbReference type="ChEBI" id="CHEBI:29105"/>
    </ligand>
</feature>
<feature type="binding site" evidence="1">
    <location>
        <position position="411"/>
    </location>
    <ligand>
        <name>Zn(2+)</name>
        <dbReference type="ChEBI" id="CHEBI:29105"/>
    </ligand>
</feature>
<feature type="binding site" evidence="1">
    <location>
        <position position="426"/>
    </location>
    <ligand>
        <name>Zn(2+)</name>
        <dbReference type="ChEBI" id="CHEBI:29105"/>
    </ligand>
</feature>
<feature type="binding site" evidence="1">
    <location>
        <position position="432"/>
    </location>
    <ligand>
        <name>Zn(2+)</name>
        <dbReference type="ChEBI" id="CHEBI:29105"/>
    </ligand>
</feature>
<accession>Q8ZN89</accession>
<comment type="function">
    <text evidence="1">DNA ligase that catalyzes the formation of phosphodiester linkages between 5'-phosphoryl and 3'-hydroxyl groups in double-stranded DNA using NAD as a coenzyme and as the energy source for the reaction. It is essential for DNA replication and repair of damaged DNA.</text>
</comment>
<comment type="catalytic activity">
    <reaction evidence="1">
        <text>NAD(+) + (deoxyribonucleotide)n-3'-hydroxyl + 5'-phospho-(deoxyribonucleotide)m = (deoxyribonucleotide)n+m + AMP + beta-nicotinamide D-nucleotide.</text>
        <dbReference type="EC" id="6.5.1.2"/>
    </reaction>
</comment>
<comment type="cofactor">
    <cofactor evidence="1">
        <name>Mg(2+)</name>
        <dbReference type="ChEBI" id="CHEBI:18420"/>
    </cofactor>
    <cofactor evidence="1">
        <name>Mn(2+)</name>
        <dbReference type="ChEBI" id="CHEBI:29035"/>
    </cofactor>
</comment>
<comment type="similarity">
    <text evidence="1">Belongs to the NAD-dependent DNA ligase family. LigA subfamily.</text>
</comment>
<evidence type="ECO:0000255" key="1">
    <source>
        <dbReference type="HAMAP-Rule" id="MF_01588"/>
    </source>
</evidence>
<gene>
    <name evidence="1" type="primary">ligA</name>
    <name type="ordered locus">STM2427</name>
</gene>